<feature type="chain" id="PRO_1000204992" description="Trigger factor">
    <location>
        <begin position="1"/>
        <end position="440"/>
    </location>
</feature>
<feature type="domain" description="PPIase FKBP-type" evidence="1">
    <location>
        <begin position="162"/>
        <end position="247"/>
    </location>
</feature>
<accession>C4K4P3</accession>
<organism>
    <name type="scientific">Hamiltonella defensa subsp. Acyrthosiphon pisum (strain 5AT)</name>
    <dbReference type="NCBI Taxonomy" id="572265"/>
    <lineage>
        <taxon>Bacteria</taxon>
        <taxon>Pseudomonadati</taxon>
        <taxon>Pseudomonadota</taxon>
        <taxon>Gammaproteobacteria</taxon>
        <taxon>Enterobacterales</taxon>
        <taxon>Enterobacteriaceae</taxon>
        <taxon>aphid secondary symbionts</taxon>
        <taxon>Candidatus Hamiltonella</taxon>
    </lineage>
</organism>
<sequence length="440" mass="50846">MQVLVETTEDLKKRATITLFSDDIEKAIKDKVVKTAKTAKMDGFRKGKVPINLIEQRYGESIQQDILIDFMQDHFSKTILQEKLNLAGRPQYLPGKYIKNENYTYSVEFEVYPEIKLKDLELIEVEKPIVSLNDDDIDKMLEKLRHQKKTWQEIPDLPAEMGDRVTFDFTGSVDGEKFEGGTASDFVMNLGEGNMIPGFEEGIVGHKMSEEFNITLTFPDEYHSESLKGKESQFLIHLKKIEKFQLPEINEEFIKNFDLPEESSIEALRAEIRKNMQRELTKAIRKRIKEQTITSLCDLNKTKVPLSLIEEEIDALRTKAASYSDKKDIIKELPRSVFAEKAESRVLVGLLLTEVIDRNKLTVDENKVQVFLEEIAEAYENPKETIEFYKNNKKLMNNIYNLALEEEAIQVLLKNAKITEKPISFSEFMKQIHETDTAND</sequence>
<dbReference type="EC" id="5.2.1.8" evidence="1"/>
<dbReference type="EMBL" id="CP001277">
    <property type="protein sequence ID" value="ACQ67536.1"/>
    <property type="molecule type" value="Genomic_DNA"/>
</dbReference>
<dbReference type="RefSeq" id="WP_015873355.1">
    <property type="nucleotide sequence ID" value="NC_012751.1"/>
</dbReference>
<dbReference type="SMR" id="C4K4P3"/>
<dbReference type="STRING" id="572265.HDEF_0810"/>
<dbReference type="GeneID" id="66260648"/>
<dbReference type="KEGG" id="hde:HDEF_0810"/>
<dbReference type="eggNOG" id="COG0544">
    <property type="taxonomic scope" value="Bacteria"/>
</dbReference>
<dbReference type="HOGENOM" id="CLU_033058_2_0_6"/>
<dbReference type="Proteomes" id="UP000002334">
    <property type="component" value="Chromosome"/>
</dbReference>
<dbReference type="GO" id="GO:0005737">
    <property type="term" value="C:cytoplasm"/>
    <property type="evidence" value="ECO:0007669"/>
    <property type="project" value="UniProtKB-SubCell"/>
</dbReference>
<dbReference type="GO" id="GO:0003755">
    <property type="term" value="F:peptidyl-prolyl cis-trans isomerase activity"/>
    <property type="evidence" value="ECO:0007669"/>
    <property type="project" value="UniProtKB-UniRule"/>
</dbReference>
<dbReference type="GO" id="GO:0044183">
    <property type="term" value="F:protein folding chaperone"/>
    <property type="evidence" value="ECO:0007669"/>
    <property type="project" value="TreeGrafter"/>
</dbReference>
<dbReference type="GO" id="GO:0043022">
    <property type="term" value="F:ribosome binding"/>
    <property type="evidence" value="ECO:0007669"/>
    <property type="project" value="TreeGrafter"/>
</dbReference>
<dbReference type="GO" id="GO:0051083">
    <property type="term" value="P:'de novo' cotranslational protein folding"/>
    <property type="evidence" value="ECO:0007669"/>
    <property type="project" value="TreeGrafter"/>
</dbReference>
<dbReference type="GO" id="GO:0051301">
    <property type="term" value="P:cell division"/>
    <property type="evidence" value="ECO:0007669"/>
    <property type="project" value="UniProtKB-KW"/>
</dbReference>
<dbReference type="GO" id="GO:0061077">
    <property type="term" value="P:chaperone-mediated protein folding"/>
    <property type="evidence" value="ECO:0007669"/>
    <property type="project" value="TreeGrafter"/>
</dbReference>
<dbReference type="GO" id="GO:0015031">
    <property type="term" value="P:protein transport"/>
    <property type="evidence" value="ECO:0007669"/>
    <property type="project" value="UniProtKB-UniRule"/>
</dbReference>
<dbReference type="GO" id="GO:0043335">
    <property type="term" value="P:protein unfolding"/>
    <property type="evidence" value="ECO:0007669"/>
    <property type="project" value="TreeGrafter"/>
</dbReference>
<dbReference type="FunFam" id="3.10.50.40:FF:000001">
    <property type="entry name" value="Trigger factor"/>
    <property type="match status" value="1"/>
</dbReference>
<dbReference type="Gene3D" id="3.10.50.40">
    <property type="match status" value="1"/>
</dbReference>
<dbReference type="Gene3D" id="3.30.70.1050">
    <property type="entry name" value="Trigger factor ribosome-binding domain"/>
    <property type="match status" value="1"/>
</dbReference>
<dbReference type="Gene3D" id="1.10.3120.10">
    <property type="entry name" value="Trigger factor, C-terminal domain"/>
    <property type="match status" value="1"/>
</dbReference>
<dbReference type="HAMAP" id="MF_00303">
    <property type="entry name" value="Trigger_factor_Tig"/>
    <property type="match status" value="1"/>
</dbReference>
<dbReference type="InterPro" id="IPR046357">
    <property type="entry name" value="PPIase_dom_sf"/>
</dbReference>
<dbReference type="InterPro" id="IPR001179">
    <property type="entry name" value="PPIase_FKBP_dom"/>
</dbReference>
<dbReference type="InterPro" id="IPR005215">
    <property type="entry name" value="Trig_fac"/>
</dbReference>
<dbReference type="InterPro" id="IPR008880">
    <property type="entry name" value="Trigger_fac_C"/>
</dbReference>
<dbReference type="InterPro" id="IPR037041">
    <property type="entry name" value="Trigger_fac_C_sf"/>
</dbReference>
<dbReference type="InterPro" id="IPR008881">
    <property type="entry name" value="Trigger_fac_ribosome-bd_bac"/>
</dbReference>
<dbReference type="InterPro" id="IPR036611">
    <property type="entry name" value="Trigger_fac_ribosome-bd_sf"/>
</dbReference>
<dbReference type="InterPro" id="IPR027304">
    <property type="entry name" value="Trigger_fact/SurA_dom_sf"/>
</dbReference>
<dbReference type="NCBIfam" id="TIGR00115">
    <property type="entry name" value="tig"/>
    <property type="match status" value="1"/>
</dbReference>
<dbReference type="PANTHER" id="PTHR30560">
    <property type="entry name" value="TRIGGER FACTOR CHAPERONE AND PEPTIDYL-PROLYL CIS/TRANS ISOMERASE"/>
    <property type="match status" value="1"/>
</dbReference>
<dbReference type="PANTHER" id="PTHR30560:SF3">
    <property type="entry name" value="TRIGGER FACTOR-LIKE PROTEIN TIG, CHLOROPLASTIC"/>
    <property type="match status" value="1"/>
</dbReference>
<dbReference type="Pfam" id="PF00254">
    <property type="entry name" value="FKBP_C"/>
    <property type="match status" value="1"/>
</dbReference>
<dbReference type="Pfam" id="PF05698">
    <property type="entry name" value="Trigger_C"/>
    <property type="match status" value="1"/>
</dbReference>
<dbReference type="Pfam" id="PF05697">
    <property type="entry name" value="Trigger_N"/>
    <property type="match status" value="1"/>
</dbReference>
<dbReference type="PIRSF" id="PIRSF003095">
    <property type="entry name" value="Trigger_factor"/>
    <property type="match status" value="1"/>
</dbReference>
<dbReference type="SUPFAM" id="SSF54534">
    <property type="entry name" value="FKBP-like"/>
    <property type="match status" value="1"/>
</dbReference>
<dbReference type="SUPFAM" id="SSF109998">
    <property type="entry name" value="Triger factor/SurA peptide-binding domain-like"/>
    <property type="match status" value="1"/>
</dbReference>
<dbReference type="SUPFAM" id="SSF102735">
    <property type="entry name" value="Trigger factor ribosome-binding domain"/>
    <property type="match status" value="1"/>
</dbReference>
<dbReference type="PROSITE" id="PS50059">
    <property type="entry name" value="FKBP_PPIASE"/>
    <property type="match status" value="1"/>
</dbReference>
<evidence type="ECO:0000255" key="1">
    <source>
        <dbReference type="HAMAP-Rule" id="MF_00303"/>
    </source>
</evidence>
<name>TIG_HAMD5</name>
<protein>
    <recommendedName>
        <fullName evidence="1">Trigger factor</fullName>
        <shortName evidence="1">TF</shortName>
        <ecNumber evidence="1">5.2.1.8</ecNumber>
    </recommendedName>
    <alternativeName>
        <fullName evidence="1">PPIase</fullName>
    </alternativeName>
</protein>
<comment type="function">
    <text evidence="1">Involved in protein export. Acts as a chaperone by maintaining the newly synthesized protein in an open conformation. Functions as a peptidyl-prolyl cis-trans isomerase.</text>
</comment>
<comment type="catalytic activity">
    <reaction evidence="1">
        <text>[protein]-peptidylproline (omega=180) = [protein]-peptidylproline (omega=0)</text>
        <dbReference type="Rhea" id="RHEA:16237"/>
        <dbReference type="Rhea" id="RHEA-COMP:10747"/>
        <dbReference type="Rhea" id="RHEA-COMP:10748"/>
        <dbReference type="ChEBI" id="CHEBI:83833"/>
        <dbReference type="ChEBI" id="CHEBI:83834"/>
        <dbReference type="EC" id="5.2.1.8"/>
    </reaction>
</comment>
<comment type="subcellular location">
    <subcellularLocation>
        <location>Cytoplasm</location>
    </subcellularLocation>
    <text evidence="1">About half TF is bound to the ribosome near the polypeptide exit tunnel while the other half is free in the cytoplasm.</text>
</comment>
<comment type="domain">
    <text evidence="1">Consists of 3 domains; the N-terminus binds the ribosome, the middle domain has PPIase activity, while the C-terminus has intrinsic chaperone activity on its own.</text>
</comment>
<comment type="similarity">
    <text evidence="1">Belongs to the FKBP-type PPIase family. Tig subfamily.</text>
</comment>
<keyword id="KW-0131">Cell cycle</keyword>
<keyword id="KW-0132">Cell division</keyword>
<keyword id="KW-0143">Chaperone</keyword>
<keyword id="KW-0963">Cytoplasm</keyword>
<keyword id="KW-0413">Isomerase</keyword>
<keyword id="KW-0697">Rotamase</keyword>
<reference key="1">
    <citation type="journal article" date="2009" name="Proc. Natl. Acad. Sci. U.S.A.">
        <title>Hamiltonella defensa, genome evolution of protective bacterial endosymbiont from pathogenic ancestors.</title>
        <authorList>
            <person name="Degnan P.H."/>
            <person name="Yu Y."/>
            <person name="Sisneros N."/>
            <person name="Wing R.A."/>
            <person name="Moran N.A."/>
        </authorList>
    </citation>
    <scope>NUCLEOTIDE SEQUENCE [LARGE SCALE GENOMIC DNA]</scope>
    <source>
        <strain>5AT</strain>
    </source>
</reference>
<proteinExistence type="inferred from homology"/>
<gene>
    <name evidence="1" type="primary">tig</name>
    <name type="ordered locus">HDEF_0810</name>
</gene>